<sequence>MGKVIQFPFGEEPEKKEEKELKTEPLTEEDFNQVIEVFKKDLKTLYPSQVKDILGVIGLGEKYGDEKFVVGLLMWEHYKHSHPLVSSFVAVLKGDKLEKISFLEAKNNYWDWKLMVKTYKDKFHTEELMRGLFELKERFEKGEI</sequence>
<organism>
    <name type="scientific">Aquifex aeolicus (strain VF5)</name>
    <dbReference type="NCBI Taxonomy" id="224324"/>
    <lineage>
        <taxon>Bacteria</taxon>
        <taxon>Pseudomonadati</taxon>
        <taxon>Aquificota</taxon>
        <taxon>Aquificia</taxon>
        <taxon>Aquificales</taxon>
        <taxon>Aquificaceae</taxon>
        <taxon>Aquifex</taxon>
    </lineage>
</organism>
<dbReference type="EMBL" id="AE000657">
    <property type="protein sequence ID" value="AAC07336.1"/>
    <property type="molecule type" value="Genomic_DNA"/>
</dbReference>
<dbReference type="PIR" id="F70417">
    <property type="entry name" value="F70417"/>
</dbReference>
<dbReference type="RefSeq" id="NP_213933.1">
    <property type="nucleotide sequence ID" value="NC_000918.1"/>
</dbReference>
<dbReference type="RefSeq" id="WP_010880871.1">
    <property type="nucleotide sequence ID" value="NC_000918.1"/>
</dbReference>
<dbReference type="SMR" id="O67369"/>
<dbReference type="STRING" id="224324.aq_1356"/>
<dbReference type="EnsemblBacteria" id="AAC07336">
    <property type="protein sequence ID" value="AAC07336"/>
    <property type="gene ID" value="aq_1356"/>
</dbReference>
<dbReference type="KEGG" id="aae:aq_1356"/>
<dbReference type="HOGENOM" id="CLU_1792468_0_0_0"/>
<dbReference type="InParanoid" id="O67369"/>
<dbReference type="OrthoDB" id="14441at2"/>
<dbReference type="Proteomes" id="UP000000798">
    <property type="component" value="Chromosome"/>
</dbReference>
<evidence type="ECO:0000256" key="1">
    <source>
        <dbReference type="SAM" id="MobiDB-lite"/>
    </source>
</evidence>
<accession>O67369</accession>
<reference key="1">
    <citation type="journal article" date="1998" name="Nature">
        <title>The complete genome of the hyperthermophilic bacterium Aquifex aeolicus.</title>
        <authorList>
            <person name="Deckert G."/>
            <person name="Warren P.V."/>
            <person name="Gaasterland T."/>
            <person name="Young W.G."/>
            <person name="Lenox A.L."/>
            <person name="Graham D.E."/>
            <person name="Overbeek R."/>
            <person name="Snead M.A."/>
            <person name="Keller M."/>
            <person name="Aujay M."/>
            <person name="Huber R."/>
            <person name="Feldman R.A."/>
            <person name="Short J.M."/>
            <person name="Olsen G.J."/>
            <person name="Swanson R.V."/>
        </authorList>
    </citation>
    <scope>NUCLEOTIDE SEQUENCE [LARGE SCALE GENOMIC DNA]</scope>
    <source>
        <strain>VF5</strain>
    </source>
</reference>
<keyword id="KW-1185">Reference proteome</keyword>
<protein>
    <recommendedName>
        <fullName>Uncharacterized protein aq_1356</fullName>
    </recommendedName>
</protein>
<proteinExistence type="predicted"/>
<gene>
    <name type="ordered locus">aq_1356</name>
</gene>
<name>Y1356_AQUAE</name>
<feature type="chain" id="PRO_0000186923" description="Uncharacterized protein aq_1356">
    <location>
        <begin position="1"/>
        <end position="144"/>
    </location>
</feature>
<feature type="region of interest" description="Disordered" evidence="1">
    <location>
        <begin position="1"/>
        <end position="24"/>
    </location>
</feature>
<feature type="compositionally biased region" description="Basic and acidic residues" evidence="1">
    <location>
        <begin position="12"/>
        <end position="24"/>
    </location>
</feature>